<accession>A9BH64</accession>
<gene>
    <name evidence="1" type="primary">rpsR</name>
    <name type="ordered locus">Pmob_0560</name>
</gene>
<name>RS18_PETMO</name>
<dbReference type="EMBL" id="CP000879">
    <property type="protein sequence ID" value="ABX31294.1"/>
    <property type="molecule type" value="Genomic_DNA"/>
</dbReference>
<dbReference type="RefSeq" id="WP_012208398.1">
    <property type="nucleotide sequence ID" value="NC_010003.1"/>
</dbReference>
<dbReference type="SMR" id="A9BH64"/>
<dbReference type="STRING" id="403833.Pmob_0560"/>
<dbReference type="KEGG" id="pmo:Pmob_0560"/>
<dbReference type="eggNOG" id="COG0238">
    <property type="taxonomic scope" value="Bacteria"/>
</dbReference>
<dbReference type="HOGENOM" id="CLU_148710_2_2_0"/>
<dbReference type="OrthoDB" id="9812008at2"/>
<dbReference type="Proteomes" id="UP000000789">
    <property type="component" value="Chromosome"/>
</dbReference>
<dbReference type="GO" id="GO:0022627">
    <property type="term" value="C:cytosolic small ribosomal subunit"/>
    <property type="evidence" value="ECO:0007669"/>
    <property type="project" value="TreeGrafter"/>
</dbReference>
<dbReference type="GO" id="GO:0070181">
    <property type="term" value="F:small ribosomal subunit rRNA binding"/>
    <property type="evidence" value="ECO:0007669"/>
    <property type="project" value="TreeGrafter"/>
</dbReference>
<dbReference type="GO" id="GO:0003735">
    <property type="term" value="F:structural constituent of ribosome"/>
    <property type="evidence" value="ECO:0007669"/>
    <property type="project" value="InterPro"/>
</dbReference>
<dbReference type="GO" id="GO:0006412">
    <property type="term" value="P:translation"/>
    <property type="evidence" value="ECO:0007669"/>
    <property type="project" value="UniProtKB-UniRule"/>
</dbReference>
<dbReference type="Gene3D" id="4.10.640.10">
    <property type="entry name" value="Ribosomal protein S18"/>
    <property type="match status" value="1"/>
</dbReference>
<dbReference type="HAMAP" id="MF_00270">
    <property type="entry name" value="Ribosomal_bS18"/>
    <property type="match status" value="1"/>
</dbReference>
<dbReference type="InterPro" id="IPR001648">
    <property type="entry name" value="Ribosomal_bS18"/>
</dbReference>
<dbReference type="InterPro" id="IPR018275">
    <property type="entry name" value="Ribosomal_bS18_CS"/>
</dbReference>
<dbReference type="InterPro" id="IPR036870">
    <property type="entry name" value="Ribosomal_bS18_sf"/>
</dbReference>
<dbReference type="NCBIfam" id="TIGR00165">
    <property type="entry name" value="S18"/>
    <property type="match status" value="1"/>
</dbReference>
<dbReference type="PANTHER" id="PTHR13479">
    <property type="entry name" value="30S RIBOSOMAL PROTEIN S18"/>
    <property type="match status" value="1"/>
</dbReference>
<dbReference type="PANTHER" id="PTHR13479:SF40">
    <property type="entry name" value="SMALL RIBOSOMAL SUBUNIT PROTEIN BS18M"/>
    <property type="match status" value="1"/>
</dbReference>
<dbReference type="Pfam" id="PF01084">
    <property type="entry name" value="Ribosomal_S18"/>
    <property type="match status" value="1"/>
</dbReference>
<dbReference type="PRINTS" id="PR00974">
    <property type="entry name" value="RIBOSOMALS18"/>
</dbReference>
<dbReference type="SUPFAM" id="SSF46911">
    <property type="entry name" value="Ribosomal protein S18"/>
    <property type="match status" value="1"/>
</dbReference>
<dbReference type="PROSITE" id="PS00057">
    <property type="entry name" value="RIBOSOMAL_S18"/>
    <property type="match status" value="1"/>
</dbReference>
<feature type="chain" id="PRO_1000196524" description="Small ribosomal subunit protein bS18">
    <location>
        <begin position="1"/>
        <end position="76"/>
    </location>
</feature>
<sequence length="76" mass="9231">MAYVKKERKRIKKCKLCRDNVEYIDYKDVRKLKEFMNDKGKILPKRINGNCAKHQRMVRTAIQRARKMMLVPYVNE</sequence>
<evidence type="ECO:0000255" key="1">
    <source>
        <dbReference type="HAMAP-Rule" id="MF_00270"/>
    </source>
</evidence>
<evidence type="ECO:0000305" key="2"/>
<keyword id="KW-0687">Ribonucleoprotein</keyword>
<keyword id="KW-0689">Ribosomal protein</keyword>
<keyword id="KW-0694">RNA-binding</keyword>
<keyword id="KW-0699">rRNA-binding</keyword>
<reference key="1">
    <citation type="submission" date="2007-11" db="EMBL/GenBank/DDBJ databases">
        <title>Complete sequence of Petroga mobilis SJ95.</title>
        <authorList>
            <consortium name="US DOE Joint Genome Institute"/>
            <person name="Copeland A."/>
            <person name="Lucas S."/>
            <person name="Lapidus A."/>
            <person name="Barry K."/>
            <person name="Glavina del Rio T."/>
            <person name="Dalin E."/>
            <person name="Tice H."/>
            <person name="Pitluck S."/>
            <person name="Meincke L."/>
            <person name="Brettin T."/>
            <person name="Bruce D."/>
            <person name="Detter J.C."/>
            <person name="Han C."/>
            <person name="Kuske C.R."/>
            <person name="Schmutz J."/>
            <person name="Larimer F."/>
            <person name="Land M."/>
            <person name="Hauser L."/>
            <person name="Kyrpides N."/>
            <person name="Mikhailova N."/>
            <person name="Noll K."/>
            <person name="Richardson P."/>
        </authorList>
    </citation>
    <scope>NUCLEOTIDE SEQUENCE [LARGE SCALE GENOMIC DNA]</scope>
    <source>
        <strain>DSM 10674 / SJ95</strain>
    </source>
</reference>
<organism>
    <name type="scientific">Petrotoga mobilis (strain DSM 10674 / SJ95)</name>
    <dbReference type="NCBI Taxonomy" id="403833"/>
    <lineage>
        <taxon>Bacteria</taxon>
        <taxon>Thermotogati</taxon>
        <taxon>Thermotogota</taxon>
        <taxon>Thermotogae</taxon>
        <taxon>Petrotogales</taxon>
        <taxon>Petrotogaceae</taxon>
        <taxon>Petrotoga</taxon>
    </lineage>
</organism>
<proteinExistence type="inferred from homology"/>
<comment type="function">
    <text evidence="1">Binds as a heterodimer with protein bS6 to the central domain of the 16S rRNA, where it helps stabilize the platform of the 30S subunit.</text>
</comment>
<comment type="subunit">
    <text evidence="1">Part of the 30S ribosomal subunit. Forms a tight heterodimer with protein bS6.</text>
</comment>
<comment type="similarity">
    <text evidence="1">Belongs to the bacterial ribosomal protein bS18 family.</text>
</comment>
<protein>
    <recommendedName>
        <fullName evidence="1">Small ribosomal subunit protein bS18</fullName>
    </recommendedName>
    <alternativeName>
        <fullName evidence="2">30S ribosomal protein S18</fullName>
    </alternativeName>
</protein>